<dbReference type="EMBL" id="L42023">
    <property type="protein sequence ID" value="AAC21823.1"/>
    <property type="molecule type" value="Genomic_DNA"/>
</dbReference>
<dbReference type="PIR" id="C64051">
    <property type="entry name" value="C64051"/>
</dbReference>
<dbReference type="RefSeq" id="NP_438324.1">
    <property type="nucleotide sequence ID" value="NC_000907.1"/>
</dbReference>
<dbReference type="SMR" id="P43709"/>
<dbReference type="STRING" id="71421.HI_0154"/>
<dbReference type="EnsemblBacteria" id="AAC21823">
    <property type="protein sequence ID" value="AAC21823"/>
    <property type="gene ID" value="HI_0154"/>
</dbReference>
<dbReference type="KEGG" id="hin:HI_0154"/>
<dbReference type="PATRIC" id="fig|71421.8.peg.158"/>
<dbReference type="eggNOG" id="COG0236">
    <property type="taxonomic scope" value="Bacteria"/>
</dbReference>
<dbReference type="HOGENOM" id="CLU_108696_5_1_6"/>
<dbReference type="OrthoDB" id="9804551at2"/>
<dbReference type="PhylomeDB" id="P43709"/>
<dbReference type="BioCyc" id="HINF71421:G1GJ1-166-MONOMER"/>
<dbReference type="UniPathway" id="UPA00094"/>
<dbReference type="PRO" id="PR:P43709"/>
<dbReference type="Proteomes" id="UP000000579">
    <property type="component" value="Chromosome"/>
</dbReference>
<dbReference type="GO" id="GO:0005829">
    <property type="term" value="C:cytosol"/>
    <property type="evidence" value="ECO:0000318"/>
    <property type="project" value="GO_Central"/>
</dbReference>
<dbReference type="GO" id="GO:0016020">
    <property type="term" value="C:membrane"/>
    <property type="evidence" value="ECO:0007669"/>
    <property type="project" value="GOC"/>
</dbReference>
<dbReference type="GO" id="GO:0000035">
    <property type="term" value="F:acyl binding"/>
    <property type="evidence" value="ECO:0000318"/>
    <property type="project" value="GO_Central"/>
</dbReference>
<dbReference type="GO" id="GO:0000036">
    <property type="term" value="F:acyl carrier activity"/>
    <property type="evidence" value="ECO:0000318"/>
    <property type="project" value="GO_Central"/>
</dbReference>
<dbReference type="GO" id="GO:0009245">
    <property type="term" value="P:lipid A biosynthetic process"/>
    <property type="evidence" value="ECO:0000318"/>
    <property type="project" value="GO_Central"/>
</dbReference>
<dbReference type="FunFam" id="1.10.1200.10:FF:000001">
    <property type="entry name" value="Acyl carrier protein"/>
    <property type="match status" value="1"/>
</dbReference>
<dbReference type="Gene3D" id="1.10.1200.10">
    <property type="entry name" value="ACP-like"/>
    <property type="match status" value="1"/>
</dbReference>
<dbReference type="HAMAP" id="MF_01217">
    <property type="entry name" value="Acyl_carrier"/>
    <property type="match status" value="1"/>
</dbReference>
<dbReference type="InterPro" id="IPR003231">
    <property type="entry name" value="ACP"/>
</dbReference>
<dbReference type="InterPro" id="IPR036736">
    <property type="entry name" value="ACP-like_sf"/>
</dbReference>
<dbReference type="InterPro" id="IPR009081">
    <property type="entry name" value="PP-bd_ACP"/>
</dbReference>
<dbReference type="InterPro" id="IPR006162">
    <property type="entry name" value="Ppantetheine_attach_site"/>
</dbReference>
<dbReference type="NCBIfam" id="TIGR00517">
    <property type="entry name" value="acyl_carrier"/>
    <property type="match status" value="1"/>
</dbReference>
<dbReference type="NCBIfam" id="NF002148">
    <property type="entry name" value="PRK00982.1-2"/>
    <property type="match status" value="1"/>
</dbReference>
<dbReference type="NCBIfam" id="NF002149">
    <property type="entry name" value="PRK00982.1-3"/>
    <property type="match status" value="1"/>
</dbReference>
<dbReference type="NCBIfam" id="NF002150">
    <property type="entry name" value="PRK00982.1-4"/>
    <property type="match status" value="1"/>
</dbReference>
<dbReference type="NCBIfam" id="NF002151">
    <property type="entry name" value="PRK00982.1-5"/>
    <property type="match status" value="1"/>
</dbReference>
<dbReference type="PANTHER" id="PTHR20863">
    <property type="entry name" value="ACYL CARRIER PROTEIN"/>
    <property type="match status" value="1"/>
</dbReference>
<dbReference type="PANTHER" id="PTHR20863:SF76">
    <property type="entry name" value="CARRIER DOMAIN-CONTAINING PROTEIN"/>
    <property type="match status" value="1"/>
</dbReference>
<dbReference type="Pfam" id="PF00550">
    <property type="entry name" value="PP-binding"/>
    <property type="match status" value="1"/>
</dbReference>
<dbReference type="SUPFAM" id="SSF47336">
    <property type="entry name" value="ACP-like"/>
    <property type="match status" value="1"/>
</dbReference>
<dbReference type="PROSITE" id="PS50075">
    <property type="entry name" value="CARRIER"/>
    <property type="match status" value="1"/>
</dbReference>
<dbReference type="PROSITE" id="PS00012">
    <property type="entry name" value="PHOSPHOPANTETHEINE"/>
    <property type="match status" value="1"/>
</dbReference>
<comment type="function">
    <text evidence="1">Carrier of the growing fatty acid chain in fatty acid biosynthesis.</text>
</comment>
<comment type="pathway">
    <text evidence="1">Lipid metabolism; fatty acid biosynthesis.</text>
</comment>
<comment type="subcellular location">
    <subcellularLocation>
        <location evidence="1">Cytoplasm</location>
    </subcellularLocation>
</comment>
<comment type="PTM">
    <text evidence="1">4'-phosphopantetheine is transferred from CoA to a specific serine of apo-ACP by AcpS. This modification is essential for activity because fatty acids are bound in thioester linkage to the sulfhydryl of the prosthetic group.</text>
</comment>
<comment type="similarity">
    <text evidence="1">Belongs to the acyl carrier protein (ACP) family.</text>
</comment>
<keyword id="KW-0963">Cytoplasm</keyword>
<keyword id="KW-0275">Fatty acid biosynthesis</keyword>
<keyword id="KW-0276">Fatty acid metabolism</keyword>
<keyword id="KW-0444">Lipid biosynthesis</keyword>
<keyword id="KW-0443">Lipid metabolism</keyword>
<keyword id="KW-0596">Phosphopantetheine</keyword>
<keyword id="KW-0597">Phosphoprotein</keyword>
<keyword id="KW-1185">Reference proteome</keyword>
<name>ACP_HAEIN</name>
<evidence type="ECO:0000255" key="1">
    <source>
        <dbReference type="HAMAP-Rule" id="MF_01217"/>
    </source>
</evidence>
<evidence type="ECO:0000255" key="2">
    <source>
        <dbReference type="PROSITE-ProRule" id="PRU00258"/>
    </source>
</evidence>
<organism>
    <name type="scientific">Haemophilus influenzae (strain ATCC 51907 / DSM 11121 / KW20 / Rd)</name>
    <dbReference type="NCBI Taxonomy" id="71421"/>
    <lineage>
        <taxon>Bacteria</taxon>
        <taxon>Pseudomonadati</taxon>
        <taxon>Pseudomonadota</taxon>
        <taxon>Gammaproteobacteria</taxon>
        <taxon>Pasteurellales</taxon>
        <taxon>Pasteurellaceae</taxon>
        <taxon>Haemophilus</taxon>
    </lineage>
</organism>
<accession>P43709</accession>
<sequence>MSIEERVKKIIVEQLGVKEEDVKPEASFVEDLGADSLDTVELVMALEEEFDIEIPDEEAEKITTVQSAIDYVQNNQ</sequence>
<gene>
    <name evidence="1" type="primary">acpP</name>
    <name type="ordered locus">HI_0154</name>
</gene>
<reference key="1">
    <citation type="journal article" date="1995" name="Science">
        <title>Whole-genome random sequencing and assembly of Haemophilus influenzae Rd.</title>
        <authorList>
            <person name="Fleischmann R.D."/>
            <person name="Adams M.D."/>
            <person name="White O."/>
            <person name="Clayton R.A."/>
            <person name="Kirkness E.F."/>
            <person name="Kerlavage A.R."/>
            <person name="Bult C.J."/>
            <person name="Tomb J.-F."/>
            <person name="Dougherty B.A."/>
            <person name="Merrick J.M."/>
            <person name="McKenney K."/>
            <person name="Sutton G.G."/>
            <person name="FitzHugh W."/>
            <person name="Fields C.A."/>
            <person name="Gocayne J.D."/>
            <person name="Scott J.D."/>
            <person name="Shirley R."/>
            <person name="Liu L.-I."/>
            <person name="Glodek A."/>
            <person name="Kelley J.M."/>
            <person name="Weidman J.F."/>
            <person name="Phillips C.A."/>
            <person name="Spriggs T."/>
            <person name="Hedblom E."/>
            <person name="Cotton M.D."/>
            <person name="Utterback T.R."/>
            <person name="Hanna M.C."/>
            <person name="Nguyen D.T."/>
            <person name="Saudek D.M."/>
            <person name="Brandon R.C."/>
            <person name="Fine L.D."/>
            <person name="Fritchman J.L."/>
            <person name="Fuhrmann J.L."/>
            <person name="Geoghagen N.S.M."/>
            <person name="Gnehm C.L."/>
            <person name="McDonald L.A."/>
            <person name="Small K.V."/>
            <person name="Fraser C.M."/>
            <person name="Smith H.O."/>
            <person name="Venter J.C."/>
        </authorList>
    </citation>
    <scope>NUCLEOTIDE SEQUENCE [LARGE SCALE GENOMIC DNA]</scope>
    <source>
        <strain>ATCC 51907 / DSM 11121 / KW20 / Rd</strain>
    </source>
</reference>
<proteinExistence type="inferred from homology"/>
<protein>
    <recommendedName>
        <fullName evidence="1">Acyl carrier protein</fullName>
        <shortName evidence="1">ACP</shortName>
    </recommendedName>
</protein>
<feature type="chain" id="PRO_0000180142" description="Acyl carrier protein">
    <location>
        <begin position="1"/>
        <end position="76"/>
    </location>
</feature>
<feature type="domain" description="Carrier" evidence="2">
    <location>
        <begin position="1"/>
        <end position="76"/>
    </location>
</feature>
<feature type="modified residue" description="O-(pantetheine 4'-phosphoryl)serine" evidence="2">
    <location>
        <position position="36"/>
    </location>
</feature>